<name>EFG_CHLL2</name>
<dbReference type="EMBL" id="CP001097">
    <property type="protein sequence ID" value="ACD91256.1"/>
    <property type="molecule type" value="Genomic_DNA"/>
</dbReference>
<dbReference type="RefSeq" id="WP_012467123.1">
    <property type="nucleotide sequence ID" value="NC_010803.1"/>
</dbReference>
<dbReference type="SMR" id="B3EH94"/>
<dbReference type="STRING" id="290315.Clim_2232"/>
<dbReference type="KEGG" id="cli:Clim_2232"/>
<dbReference type="eggNOG" id="COG0480">
    <property type="taxonomic scope" value="Bacteria"/>
</dbReference>
<dbReference type="HOGENOM" id="CLU_002794_4_1_10"/>
<dbReference type="OrthoDB" id="9801591at2"/>
<dbReference type="Proteomes" id="UP000008841">
    <property type="component" value="Chromosome"/>
</dbReference>
<dbReference type="GO" id="GO:0005737">
    <property type="term" value="C:cytoplasm"/>
    <property type="evidence" value="ECO:0007669"/>
    <property type="project" value="UniProtKB-SubCell"/>
</dbReference>
<dbReference type="GO" id="GO:0005525">
    <property type="term" value="F:GTP binding"/>
    <property type="evidence" value="ECO:0007669"/>
    <property type="project" value="UniProtKB-UniRule"/>
</dbReference>
<dbReference type="GO" id="GO:0003924">
    <property type="term" value="F:GTPase activity"/>
    <property type="evidence" value="ECO:0007669"/>
    <property type="project" value="InterPro"/>
</dbReference>
<dbReference type="GO" id="GO:0003746">
    <property type="term" value="F:translation elongation factor activity"/>
    <property type="evidence" value="ECO:0007669"/>
    <property type="project" value="UniProtKB-UniRule"/>
</dbReference>
<dbReference type="GO" id="GO:0032790">
    <property type="term" value="P:ribosome disassembly"/>
    <property type="evidence" value="ECO:0007669"/>
    <property type="project" value="TreeGrafter"/>
</dbReference>
<dbReference type="CDD" id="cd01886">
    <property type="entry name" value="EF-G"/>
    <property type="match status" value="1"/>
</dbReference>
<dbReference type="CDD" id="cd16262">
    <property type="entry name" value="EFG_III"/>
    <property type="match status" value="1"/>
</dbReference>
<dbReference type="CDD" id="cd01434">
    <property type="entry name" value="EFG_mtEFG1_IV"/>
    <property type="match status" value="1"/>
</dbReference>
<dbReference type="CDD" id="cd03713">
    <property type="entry name" value="EFG_mtEFG_C"/>
    <property type="match status" value="1"/>
</dbReference>
<dbReference type="CDD" id="cd04088">
    <property type="entry name" value="EFG_mtEFG_II"/>
    <property type="match status" value="1"/>
</dbReference>
<dbReference type="FunFam" id="2.40.30.10:FF:000006">
    <property type="entry name" value="Elongation factor G"/>
    <property type="match status" value="1"/>
</dbReference>
<dbReference type="FunFam" id="3.30.230.10:FF:000003">
    <property type="entry name" value="Elongation factor G"/>
    <property type="match status" value="1"/>
</dbReference>
<dbReference type="FunFam" id="3.30.70.240:FF:000001">
    <property type="entry name" value="Elongation factor G"/>
    <property type="match status" value="1"/>
</dbReference>
<dbReference type="FunFam" id="3.30.70.870:FF:000001">
    <property type="entry name" value="Elongation factor G"/>
    <property type="match status" value="1"/>
</dbReference>
<dbReference type="FunFam" id="3.40.50.300:FF:000029">
    <property type="entry name" value="Elongation factor G"/>
    <property type="match status" value="1"/>
</dbReference>
<dbReference type="Gene3D" id="3.30.230.10">
    <property type="match status" value="1"/>
</dbReference>
<dbReference type="Gene3D" id="3.30.70.240">
    <property type="match status" value="1"/>
</dbReference>
<dbReference type="Gene3D" id="3.30.70.870">
    <property type="entry name" value="Elongation Factor G (Translational Gtpase), domain 3"/>
    <property type="match status" value="1"/>
</dbReference>
<dbReference type="Gene3D" id="3.40.50.300">
    <property type="entry name" value="P-loop containing nucleotide triphosphate hydrolases"/>
    <property type="match status" value="1"/>
</dbReference>
<dbReference type="Gene3D" id="2.40.30.10">
    <property type="entry name" value="Translation factors"/>
    <property type="match status" value="1"/>
</dbReference>
<dbReference type="HAMAP" id="MF_00054_B">
    <property type="entry name" value="EF_G_EF_2_B"/>
    <property type="match status" value="1"/>
</dbReference>
<dbReference type="InterPro" id="IPR041095">
    <property type="entry name" value="EFG_II"/>
</dbReference>
<dbReference type="InterPro" id="IPR009022">
    <property type="entry name" value="EFG_III"/>
</dbReference>
<dbReference type="InterPro" id="IPR035647">
    <property type="entry name" value="EFG_III/V"/>
</dbReference>
<dbReference type="InterPro" id="IPR047872">
    <property type="entry name" value="EFG_IV"/>
</dbReference>
<dbReference type="InterPro" id="IPR035649">
    <property type="entry name" value="EFG_V"/>
</dbReference>
<dbReference type="InterPro" id="IPR000640">
    <property type="entry name" value="EFG_V-like"/>
</dbReference>
<dbReference type="InterPro" id="IPR004161">
    <property type="entry name" value="EFTu-like_2"/>
</dbReference>
<dbReference type="InterPro" id="IPR031157">
    <property type="entry name" value="G_TR_CS"/>
</dbReference>
<dbReference type="InterPro" id="IPR027417">
    <property type="entry name" value="P-loop_NTPase"/>
</dbReference>
<dbReference type="InterPro" id="IPR020568">
    <property type="entry name" value="Ribosomal_Su5_D2-typ_SF"/>
</dbReference>
<dbReference type="InterPro" id="IPR014721">
    <property type="entry name" value="Ribsml_uS5_D2-typ_fold_subgr"/>
</dbReference>
<dbReference type="InterPro" id="IPR005225">
    <property type="entry name" value="Small_GTP-bd"/>
</dbReference>
<dbReference type="InterPro" id="IPR000795">
    <property type="entry name" value="T_Tr_GTP-bd_dom"/>
</dbReference>
<dbReference type="InterPro" id="IPR009000">
    <property type="entry name" value="Transl_B-barrel_sf"/>
</dbReference>
<dbReference type="InterPro" id="IPR004540">
    <property type="entry name" value="Transl_elong_EFG/EF2"/>
</dbReference>
<dbReference type="InterPro" id="IPR005517">
    <property type="entry name" value="Transl_elong_EFG/EF2_IV"/>
</dbReference>
<dbReference type="NCBIfam" id="TIGR00484">
    <property type="entry name" value="EF-G"/>
    <property type="match status" value="1"/>
</dbReference>
<dbReference type="NCBIfam" id="NF009379">
    <property type="entry name" value="PRK12740.1-3"/>
    <property type="match status" value="1"/>
</dbReference>
<dbReference type="NCBIfam" id="NF009381">
    <property type="entry name" value="PRK12740.1-5"/>
    <property type="match status" value="1"/>
</dbReference>
<dbReference type="NCBIfam" id="TIGR00231">
    <property type="entry name" value="small_GTP"/>
    <property type="match status" value="1"/>
</dbReference>
<dbReference type="PANTHER" id="PTHR43261:SF1">
    <property type="entry name" value="RIBOSOME-RELEASING FACTOR 2, MITOCHONDRIAL"/>
    <property type="match status" value="1"/>
</dbReference>
<dbReference type="PANTHER" id="PTHR43261">
    <property type="entry name" value="TRANSLATION ELONGATION FACTOR G-RELATED"/>
    <property type="match status" value="1"/>
</dbReference>
<dbReference type="Pfam" id="PF00679">
    <property type="entry name" value="EFG_C"/>
    <property type="match status" value="1"/>
</dbReference>
<dbReference type="Pfam" id="PF14492">
    <property type="entry name" value="EFG_III"/>
    <property type="match status" value="1"/>
</dbReference>
<dbReference type="Pfam" id="PF03764">
    <property type="entry name" value="EFG_IV"/>
    <property type="match status" value="1"/>
</dbReference>
<dbReference type="Pfam" id="PF00009">
    <property type="entry name" value="GTP_EFTU"/>
    <property type="match status" value="1"/>
</dbReference>
<dbReference type="Pfam" id="PF03144">
    <property type="entry name" value="GTP_EFTU_D2"/>
    <property type="match status" value="1"/>
</dbReference>
<dbReference type="PRINTS" id="PR00315">
    <property type="entry name" value="ELONGATNFCT"/>
</dbReference>
<dbReference type="SMART" id="SM00838">
    <property type="entry name" value="EFG_C"/>
    <property type="match status" value="1"/>
</dbReference>
<dbReference type="SMART" id="SM00889">
    <property type="entry name" value="EFG_IV"/>
    <property type="match status" value="1"/>
</dbReference>
<dbReference type="SUPFAM" id="SSF54980">
    <property type="entry name" value="EF-G C-terminal domain-like"/>
    <property type="match status" value="2"/>
</dbReference>
<dbReference type="SUPFAM" id="SSF52540">
    <property type="entry name" value="P-loop containing nucleoside triphosphate hydrolases"/>
    <property type="match status" value="1"/>
</dbReference>
<dbReference type="SUPFAM" id="SSF54211">
    <property type="entry name" value="Ribosomal protein S5 domain 2-like"/>
    <property type="match status" value="1"/>
</dbReference>
<dbReference type="SUPFAM" id="SSF50447">
    <property type="entry name" value="Translation proteins"/>
    <property type="match status" value="1"/>
</dbReference>
<dbReference type="PROSITE" id="PS00301">
    <property type="entry name" value="G_TR_1"/>
    <property type="match status" value="1"/>
</dbReference>
<dbReference type="PROSITE" id="PS51722">
    <property type="entry name" value="G_TR_2"/>
    <property type="match status" value="1"/>
</dbReference>
<accession>B3EH94</accession>
<feature type="chain" id="PRO_1000091695" description="Elongation factor G">
    <location>
        <begin position="1"/>
        <end position="704"/>
    </location>
</feature>
<feature type="domain" description="tr-type G">
    <location>
        <begin position="8"/>
        <end position="291"/>
    </location>
</feature>
<feature type="binding site" evidence="1">
    <location>
        <begin position="17"/>
        <end position="24"/>
    </location>
    <ligand>
        <name>GTP</name>
        <dbReference type="ChEBI" id="CHEBI:37565"/>
    </ligand>
</feature>
<feature type="binding site" evidence="1">
    <location>
        <begin position="90"/>
        <end position="94"/>
    </location>
    <ligand>
        <name>GTP</name>
        <dbReference type="ChEBI" id="CHEBI:37565"/>
    </ligand>
</feature>
<feature type="binding site" evidence="1">
    <location>
        <begin position="144"/>
        <end position="147"/>
    </location>
    <ligand>
        <name>GTP</name>
        <dbReference type="ChEBI" id="CHEBI:37565"/>
    </ligand>
</feature>
<proteinExistence type="inferred from homology"/>
<organism>
    <name type="scientific">Chlorobium limicola (strain DSM 245 / NBRC 103803 / 6330)</name>
    <dbReference type="NCBI Taxonomy" id="290315"/>
    <lineage>
        <taxon>Bacteria</taxon>
        <taxon>Pseudomonadati</taxon>
        <taxon>Chlorobiota</taxon>
        <taxon>Chlorobiia</taxon>
        <taxon>Chlorobiales</taxon>
        <taxon>Chlorobiaceae</taxon>
        <taxon>Chlorobium/Pelodictyon group</taxon>
        <taxon>Chlorobium</taxon>
    </lineage>
</organism>
<evidence type="ECO:0000255" key="1">
    <source>
        <dbReference type="HAMAP-Rule" id="MF_00054"/>
    </source>
</evidence>
<reference key="1">
    <citation type="submission" date="2008-05" db="EMBL/GenBank/DDBJ databases">
        <title>Complete sequence of Chlorobium limicola DSM 245.</title>
        <authorList>
            <consortium name="US DOE Joint Genome Institute"/>
            <person name="Lucas S."/>
            <person name="Copeland A."/>
            <person name="Lapidus A."/>
            <person name="Glavina del Rio T."/>
            <person name="Dalin E."/>
            <person name="Tice H."/>
            <person name="Bruce D."/>
            <person name="Goodwin L."/>
            <person name="Pitluck S."/>
            <person name="Schmutz J."/>
            <person name="Larimer F."/>
            <person name="Land M."/>
            <person name="Hauser L."/>
            <person name="Kyrpides N."/>
            <person name="Ovchinnikova G."/>
            <person name="Zhao F."/>
            <person name="Li T."/>
            <person name="Liu Z."/>
            <person name="Overmann J."/>
            <person name="Bryant D.A."/>
            <person name="Richardson P."/>
        </authorList>
    </citation>
    <scope>NUCLEOTIDE SEQUENCE [LARGE SCALE GENOMIC DNA]</scope>
    <source>
        <strain>DSM 245 / NBRC 103803 / 6330</strain>
    </source>
</reference>
<comment type="function">
    <text evidence="1">Catalyzes the GTP-dependent ribosomal translocation step during translation elongation. During this step, the ribosome changes from the pre-translocational (PRE) to the post-translocational (POST) state as the newly formed A-site-bound peptidyl-tRNA and P-site-bound deacylated tRNA move to the P and E sites, respectively. Catalyzes the coordinated movement of the two tRNA molecules, the mRNA and conformational changes in the ribosome.</text>
</comment>
<comment type="subcellular location">
    <subcellularLocation>
        <location evidence="1">Cytoplasm</location>
    </subcellularLocation>
</comment>
<comment type="similarity">
    <text evidence="1">Belongs to the TRAFAC class translation factor GTPase superfamily. Classic translation factor GTPase family. EF-G/EF-2 subfamily.</text>
</comment>
<keyword id="KW-0963">Cytoplasm</keyword>
<keyword id="KW-0251">Elongation factor</keyword>
<keyword id="KW-0342">GTP-binding</keyword>
<keyword id="KW-0547">Nucleotide-binding</keyword>
<keyword id="KW-0648">Protein biosynthesis</keyword>
<protein>
    <recommendedName>
        <fullName evidence="1">Elongation factor G</fullName>
        <shortName evidence="1">EF-G</shortName>
    </recommendedName>
</protein>
<sequence>MTRLVDLDKVRNIGIMAHIDAGKTTTTERILYYTGRLHRMGEVHDGGATMDWMEQEKERGITITSAATTCFWIPKFGNYSGINHRINIIDTPGHVDFTVEVERSLRVLDGAVALFCAVGGVEPQSETVWRQANKYGVPRIAYVNKMDRTGANFFDTVKAIRERLGANPVPLQIPIGEGEIFAGFVDLIRMKGIIYNKDDGSTYNEVEIPHDLQNEARTWRINMLEAVSEVDDTLLEKYLNGEEITEQEVRSVLRKATLKVTIIPVLCGSSFKNKGVQFMLDAVVEYLASPVDVGAVEGHHPKTEESVSREPKDEEPFAGLAFKIATDPFVGKLTFFRVYSGVLKAGSYVLNTMTGKKERIGRILQMHSNKREDIDCVYAGDIAAAVGLKDVRTGDTICDESNPVVLEKMVFPEPVIEIAIEPKTKADNDKLGMSLAKLAEEDPTFKVKTDEETGQTLIAGMGELHLEILVDRLKREFKVEANVGKPQVAYRETIRKTVEFEGKFVRQSGGKGQFGLVVLKVEPLEEGKGYEFVDAIKGGVIPREYIPAVNAGVQQAMKNGVVAGFPMQDIKVTLLDGKYHEVDSSEMAFKIAGSIGFKGAAKKADPVLLEPIMKVEVVTPEEYLGDVMGDLSSRRGHIEGMGQRAGAQFVNSKVPLSAMFGYSTDLRSMSQGRANYSMEFECYREVPRSIAEAMQEKRVSRDLE</sequence>
<gene>
    <name evidence="1" type="primary">fusA</name>
    <name type="ordered locus">Clim_2232</name>
</gene>